<accession>P58962</accession>
<accession>Q8MLU7</accession>
<evidence type="ECO:0000250" key="1"/>
<evidence type="ECO:0000255" key="2"/>
<evidence type="ECO:0000269" key="3">
    <source>
    </source>
</evidence>
<evidence type="ECO:0000305" key="4"/>
<reference key="1">
    <citation type="journal article" date="2000" name="Science">
        <title>The genome sequence of Drosophila melanogaster.</title>
        <authorList>
            <person name="Adams M.D."/>
            <person name="Celniker S.E."/>
            <person name="Holt R.A."/>
            <person name="Evans C.A."/>
            <person name="Gocayne J.D."/>
            <person name="Amanatides P.G."/>
            <person name="Scherer S.E."/>
            <person name="Li P.W."/>
            <person name="Hoskins R.A."/>
            <person name="Galle R.F."/>
            <person name="George R.A."/>
            <person name="Lewis S.E."/>
            <person name="Richards S."/>
            <person name="Ashburner M."/>
            <person name="Henderson S.N."/>
            <person name="Sutton G.G."/>
            <person name="Wortman J.R."/>
            <person name="Yandell M.D."/>
            <person name="Zhang Q."/>
            <person name="Chen L.X."/>
            <person name="Brandon R.C."/>
            <person name="Rogers Y.-H.C."/>
            <person name="Blazej R.G."/>
            <person name="Champe M."/>
            <person name="Pfeiffer B.D."/>
            <person name="Wan K.H."/>
            <person name="Doyle C."/>
            <person name="Baxter E.G."/>
            <person name="Helt G."/>
            <person name="Nelson C.R."/>
            <person name="Miklos G.L.G."/>
            <person name="Abril J.F."/>
            <person name="Agbayani A."/>
            <person name="An H.-J."/>
            <person name="Andrews-Pfannkoch C."/>
            <person name="Baldwin D."/>
            <person name="Ballew R.M."/>
            <person name="Basu A."/>
            <person name="Baxendale J."/>
            <person name="Bayraktaroglu L."/>
            <person name="Beasley E.M."/>
            <person name="Beeson K.Y."/>
            <person name="Benos P.V."/>
            <person name="Berman B.P."/>
            <person name="Bhandari D."/>
            <person name="Bolshakov S."/>
            <person name="Borkova D."/>
            <person name="Botchan M.R."/>
            <person name="Bouck J."/>
            <person name="Brokstein P."/>
            <person name="Brottier P."/>
            <person name="Burtis K.C."/>
            <person name="Busam D.A."/>
            <person name="Butler H."/>
            <person name="Cadieu E."/>
            <person name="Center A."/>
            <person name="Chandra I."/>
            <person name="Cherry J.M."/>
            <person name="Cawley S."/>
            <person name="Dahlke C."/>
            <person name="Davenport L.B."/>
            <person name="Davies P."/>
            <person name="de Pablos B."/>
            <person name="Delcher A."/>
            <person name="Deng Z."/>
            <person name="Mays A.D."/>
            <person name="Dew I."/>
            <person name="Dietz S.M."/>
            <person name="Dodson K."/>
            <person name="Doup L.E."/>
            <person name="Downes M."/>
            <person name="Dugan-Rocha S."/>
            <person name="Dunkov B.C."/>
            <person name="Dunn P."/>
            <person name="Durbin K.J."/>
            <person name="Evangelista C.C."/>
            <person name="Ferraz C."/>
            <person name="Ferriera S."/>
            <person name="Fleischmann W."/>
            <person name="Fosler C."/>
            <person name="Gabrielian A.E."/>
            <person name="Garg N.S."/>
            <person name="Gelbart W.M."/>
            <person name="Glasser K."/>
            <person name="Glodek A."/>
            <person name="Gong F."/>
            <person name="Gorrell J.H."/>
            <person name="Gu Z."/>
            <person name="Guan P."/>
            <person name="Harris M."/>
            <person name="Harris N.L."/>
            <person name="Harvey D.A."/>
            <person name="Heiman T.J."/>
            <person name="Hernandez J.R."/>
            <person name="Houck J."/>
            <person name="Hostin D."/>
            <person name="Houston K.A."/>
            <person name="Howland T.J."/>
            <person name="Wei M.-H."/>
            <person name="Ibegwam C."/>
            <person name="Jalali M."/>
            <person name="Kalush F."/>
            <person name="Karpen G.H."/>
            <person name="Ke Z."/>
            <person name="Kennison J.A."/>
            <person name="Ketchum K.A."/>
            <person name="Kimmel B.E."/>
            <person name="Kodira C.D."/>
            <person name="Kraft C.L."/>
            <person name="Kravitz S."/>
            <person name="Kulp D."/>
            <person name="Lai Z."/>
            <person name="Lasko P."/>
            <person name="Lei Y."/>
            <person name="Levitsky A.A."/>
            <person name="Li J.H."/>
            <person name="Li Z."/>
            <person name="Liang Y."/>
            <person name="Lin X."/>
            <person name="Liu X."/>
            <person name="Mattei B."/>
            <person name="McIntosh T.C."/>
            <person name="McLeod M.P."/>
            <person name="McPherson D."/>
            <person name="Merkulov G."/>
            <person name="Milshina N.V."/>
            <person name="Mobarry C."/>
            <person name="Morris J."/>
            <person name="Moshrefi A."/>
            <person name="Mount S.M."/>
            <person name="Moy M."/>
            <person name="Murphy B."/>
            <person name="Murphy L."/>
            <person name="Muzny D.M."/>
            <person name="Nelson D.L."/>
            <person name="Nelson D.R."/>
            <person name="Nelson K.A."/>
            <person name="Nixon K."/>
            <person name="Nusskern D.R."/>
            <person name="Pacleb J.M."/>
            <person name="Palazzolo M."/>
            <person name="Pittman G.S."/>
            <person name="Pan S."/>
            <person name="Pollard J."/>
            <person name="Puri V."/>
            <person name="Reese M.G."/>
            <person name="Reinert K."/>
            <person name="Remington K."/>
            <person name="Saunders R.D.C."/>
            <person name="Scheeler F."/>
            <person name="Shen H."/>
            <person name="Shue B.C."/>
            <person name="Siden-Kiamos I."/>
            <person name="Simpson M."/>
            <person name="Skupski M.P."/>
            <person name="Smith T.J."/>
            <person name="Spier E."/>
            <person name="Spradling A.C."/>
            <person name="Stapleton M."/>
            <person name="Strong R."/>
            <person name="Sun E."/>
            <person name="Svirskas R."/>
            <person name="Tector C."/>
            <person name="Turner R."/>
            <person name="Venter E."/>
            <person name="Wang A.H."/>
            <person name="Wang X."/>
            <person name="Wang Z.-Y."/>
            <person name="Wassarman D.A."/>
            <person name="Weinstock G.M."/>
            <person name="Weissenbach J."/>
            <person name="Williams S.M."/>
            <person name="Woodage T."/>
            <person name="Worley K.C."/>
            <person name="Wu D."/>
            <person name="Yang S."/>
            <person name="Yao Q.A."/>
            <person name="Ye J."/>
            <person name="Yeh R.-F."/>
            <person name="Zaveri J.S."/>
            <person name="Zhan M."/>
            <person name="Zhang G."/>
            <person name="Zhao Q."/>
            <person name="Zheng L."/>
            <person name="Zheng X.H."/>
            <person name="Zhong F.N."/>
            <person name="Zhong W."/>
            <person name="Zhou X."/>
            <person name="Zhu S.C."/>
            <person name="Zhu X."/>
            <person name="Smith H.O."/>
            <person name="Gibbs R.A."/>
            <person name="Myers E.W."/>
            <person name="Rubin G.M."/>
            <person name="Venter J.C."/>
        </authorList>
    </citation>
    <scope>NUCLEOTIDE SEQUENCE [LARGE SCALE GENOMIC DNA]</scope>
    <source>
        <strain>Berkeley</strain>
    </source>
</reference>
<reference key="2">
    <citation type="journal article" date="2002" name="Genome Biol.">
        <title>Annotation of the Drosophila melanogaster euchromatic genome: a systematic review.</title>
        <authorList>
            <person name="Misra S."/>
            <person name="Crosby M.A."/>
            <person name="Mungall C.J."/>
            <person name="Matthews B.B."/>
            <person name="Campbell K.S."/>
            <person name="Hradecky P."/>
            <person name="Huang Y."/>
            <person name="Kaminker J.S."/>
            <person name="Millburn G.H."/>
            <person name="Prochnik S.E."/>
            <person name="Smith C.D."/>
            <person name="Tupy J.L."/>
            <person name="Whitfield E.J."/>
            <person name="Bayraktaroglu L."/>
            <person name="Berman B.P."/>
            <person name="Bettencourt B.R."/>
            <person name="Celniker S.E."/>
            <person name="de Grey A.D.N.J."/>
            <person name="Drysdale R.A."/>
            <person name="Harris N.L."/>
            <person name="Richter J."/>
            <person name="Russo S."/>
            <person name="Schroeder A.J."/>
            <person name="Shu S.Q."/>
            <person name="Stapleton M."/>
            <person name="Yamada C."/>
            <person name="Ashburner M."/>
            <person name="Gelbart W.M."/>
            <person name="Rubin G.M."/>
            <person name="Lewis S.E."/>
        </authorList>
    </citation>
    <scope>GENOME REANNOTATION</scope>
    <source>
        <strain>Berkeley</strain>
    </source>
</reference>
<reference key="3">
    <citation type="journal article" date="2000" name="Science">
        <title>Candidate taste receptors in Drosophila.</title>
        <authorList>
            <person name="Clyne P.J."/>
            <person name="Warr C.G."/>
            <person name="Carlson J.R."/>
        </authorList>
    </citation>
    <scope>IDENTIFICATION</scope>
    <scope>TISSUE SPECIFICITY</scope>
</reference>
<reference key="4">
    <citation type="journal article" date="2001" name="Curr. Biol.">
        <title>Spatially restricted expression of candidate taste receptors in the Drosophila gustatory system.</title>
        <authorList>
            <person name="Dunipace L."/>
            <person name="Meister S."/>
            <person name="McNealy C."/>
            <person name="Amrein H."/>
        </authorList>
    </citation>
    <scope>IDENTIFICATION</scope>
</reference>
<name>GR58A_DROME</name>
<gene>
    <name type="primary">Gr58a</name>
    <name type="synonym">GR58A.1</name>
    <name type="ORF">CG30396</name>
</gene>
<feature type="chain" id="PRO_0000216518" description="Putative gustatory receptor 58a">
    <location>
        <begin position="1"/>
        <end position="395"/>
    </location>
</feature>
<feature type="topological domain" description="Cytoplasmic" evidence="1">
    <location>
        <begin position="1"/>
        <end position="32"/>
    </location>
</feature>
<feature type="transmembrane region" description="Helical; Name=1" evidence="2">
    <location>
        <begin position="33"/>
        <end position="53"/>
    </location>
</feature>
<feature type="topological domain" description="Extracellular" evidence="1">
    <location>
        <begin position="54"/>
        <end position="72"/>
    </location>
</feature>
<feature type="transmembrane region" description="Helical; Name=2" evidence="2">
    <location>
        <begin position="73"/>
        <end position="93"/>
    </location>
</feature>
<feature type="topological domain" description="Cytoplasmic" evidence="1">
    <location>
        <begin position="94"/>
        <end position="131"/>
    </location>
</feature>
<feature type="transmembrane region" description="Helical; Name=3" evidence="2">
    <location>
        <begin position="132"/>
        <end position="152"/>
    </location>
</feature>
<feature type="topological domain" description="Extracellular" evidence="1">
    <location>
        <begin position="153"/>
        <end position="169"/>
    </location>
</feature>
<feature type="transmembrane region" description="Helical; Name=4" evidence="2">
    <location>
        <begin position="170"/>
        <end position="190"/>
    </location>
</feature>
<feature type="topological domain" description="Cytoplasmic" evidence="1">
    <location>
        <begin position="191"/>
        <end position="250"/>
    </location>
</feature>
<feature type="transmembrane region" description="Helical; Name=5" evidence="2">
    <location>
        <begin position="251"/>
        <end position="271"/>
    </location>
</feature>
<feature type="topological domain" description="Extracellular" evidence="1">
    <location>
        <begin position="272"/>
        <end position="288"/>
    </location>
</feature>
<feature type="transmembrane region" description="Helical; Name=6" evidence="2">
    <location>
        <begin position="289"/>
        <end position="309"/>
    </location>
</feature>
<feature type="topological domain" description="Cytoplasmic" evidence="1">
    <location>
        <begin position="310"/>
        <end position="366"/>
    </location>
</feature>
<feature type="transmembrane region" description="Helical; Name=7" evidence="2">
    <location>
        <begin position="367"/>
        <end position="387"/>
    </location>
</feature>
<feature type="topological domain" description="Extracellular" evidence="1">
    <location>
        <begin position="388"/>
        <end position="395"/>
    </location>
</feature>
<feature type="glycosylation site" description="N-linked (GlcNAc...) asparagine" evidence="2">
    <location>
        <position position="278"/>
    </location>
</feature>
<comment type="function">
    <text evidence="1">Probable gustatory receptor which mediates acceptance or avoidance behavior, depending on its substrates.</text>
</comment>
<comment type="subcellular location">
    <subcellularLocation>
        <location evidence="1">Cell membrane</location>
        <topology evidence="1">Multi-pass membrane protein</topology>
    </subcellularLocation>
</comment>
<comment type="tissue specificity">
    <text evidence="3">Expressed in the adult labellar chemosensory neurons.</text>
</comment>
<comment type="similarity">
    <text evidence="4">Belongs to the insect chemoreceptor superfamily. Gustatory receptor (GR) family. Gr22e subfamily.</text>
</comment>
<keyword id="KW-1003">Cell membrane</keyword>
<keyword id="KW-0325">Glycoprotein</keyword>
<keyword id="KW-0472">Membrane</keyword>
<keyword id="KW-0675">Receptor</keyword>
<keyword id="KW-1185">Reference proteome</keyword>
<keyword id="KW-0807">Transducer</keyword>
<keyword id="KW-0812">Transmembrane</keyword>
<keyword id="KW-1133">Transmembrane helix</keyword>
<protein>
    <recommendedName>
        <fullName>Putative gustatory receptor 58a</fullName>
    </recommendedName>
</protein>
<organism>
    <name type="scientific">Drosophila melanogaster</name>
    <name type="common">Fruit fly</name>
    <dbReference type="NCBI Taxonomy" id="7227"/>
    <lineage>
        <taxon>Eukaryota</taxon>
        <taxon>Metazoa</taxon>
        <taxon>Ecdysozoa</taxon>
        <taxon>Arthropoda</taxon>
        <taxon>Hexapoda</taxon>
        <taxon>Insecta</taxon>
        <taxon>Pterygota</taxon>
        <taxon>Neoptera</taxon>
        <taxon>Endopterygota</taxon>
        <taxon>Diptera</taxon>
        <taxon>Brachycera</taxon>
        <taxon>Muscomorpha</taxon>
        <taxon>Ephydroidea</taxon>
        <taxon>Drosophilidae</taxon>
        <taxon>Drosophila</taxon>
        <taxon>Sophophora</taxon>
    </lineage>
</organism>
<sequence>MLLKFMYIYGIGCGLMPAPLKKGQFLLGYKQRWYLIYTACLHGGLLTVLPFTFPHYMYDDSYMSSNPVLKWTFNLTNITRIMAMFSGVLLMWFRRKRILNLGENLILHCLKCKTLDNRSKKYSKLRKRVRNVLFQMLLVANLSILLGALILFRIHSVQRISKTAMIVAHITQFIYVVFMMTGICVILLVLHWQSERLQIALKDLCSFLNHEERNSLTLSENKANRSLGKLAKLFKLFAENQRLVREVFRTFDLPIALLLLKMFVTNVNLVYHGVQFGNDTIETSSYTRIVGQWVVISHYWSAVLLMNVVDDVTRRSDLKMGDLLREFSHLELVKRDFHLQLELFSDHLRCHPSTYKVCGLFIFNKQTSLAYFFYVLVQVLVLVQFDLKNKVEKRN</sequence>
<proteinExistence type="evidence at transcript level"/>
<dbReference type="EMBL" id="AE013599">
    <property type="protein sequence ID" value="AAM71021.2"/>
    <property type="molecule type" value="Genomic_DNA"/>
</dbReference>
<dbReference type="RefSeq" id="NP_726135.2">
    <property type="nucleotide sequence ID" value="NM_166491.2"/>
</dbReference>
<dbReference type="SMR" id="P58962"/>
<dbReference type="FunCoup" id="P58962">
    <property type="interactions" value="7"/>
</dbReference>
<dbReference type="IntAct" id="P58962">
    <property type="interactions" value="1"/>
</dbReference>
<dbReference type="STRING" id="7227.FBpp0071644"/>
<dbReference type="GlyCosmos" id="P58962">
    <property type="glycosylation" value="1 site, No reported glycans"/>
</dbReference>
<dbReference type="GlyGen" id="P58962">
    <property type="glycosylation" value="1 site"/>
</dbReference>
<dbReference type="PaxDb" id="7227-FBpp0071644"/>
<dbReference type="EnsemblMetazoa" id="FBtr0071728">
    <property type="protein sequence ID" value="FBpp0071644"/>
    <property type="gene ID" value="FBgn0041239"/>
</dbReference>
<dbReference type="GeneID" id="117344"/>
<dbReference type="KEGG" id="dme:Dmel_CG30396"/>
<dbReference type="AGR" id="FB:FBgn0041239"/>
<dbReference type="CTD" id="117344"/>
<dbReference type="FlyBase" id="FBgn0041239">
    <property type="gene designation" value="Gr58a"/>
</dbReference>
<dbReference type="VEuPathDB" id="VectorBase:FBgn0041239"/>
<dbReference type="eggNOG" id="ENOG502TCED">
    <property type="taxonomic scope" value="Eukaryota"/>
</dbReference>
<dbReference type="GeneTree" id="ENSGT00940000176507"/>
<dbReference type="HOGENOM" id="CLU_059805_0_0_1"/>
<dbReference type="InParanoid" id="P58962"/>
<dbReference type="OMA" id="VVISHYW"/>
<dbReference type="OrthoDB" id="7935856at2759"/>
<dbReference type="PhylomeDB" id="P58962"/>
<dbReference type="BioGRID-ORCS" id="117344">
    <property type="hits" value="0 hits in 1 CRISPR screen"/>
</dbReference>
<dbReference type="GenomeRNAi" id="117344"/>
<dbReference type="PRO" id="PR:P58962"/>
<dbReference type="Proteomes" id="UP000000803">
    <property type="component" value="Chromosome 2R"/>
</dbReference>
<dbReference type="GO" id="GO:0030424">
    <property type="term" value="C:axon"/>
    <property type="evidence" value="ECO:0000318"/>
    <property type="project" value="GO_Central"/>
</dbReference>
<dbReference type="GO" id="GO:0030425">
    <property type="term" value="C:dendrite"/>
    <property type="evidence" value="ECO:0000318"/>
    <property type="project" value="GO_Central"/>
</dbReference>
<dbReference type="GO" id="GO:0016020">
    <property type="term" value="C:membrane"/>
    <property type="evidence" value="ECO:0000303"/>
    <property type="project" value="UniProtKB"/>
</dbReference>
<dbReference type="GO" id="GO:0043025">
    <property type="term" value="C:neuronal cell body"/>
    <property type="evidence" value="ECO:0000318"/>
    <property type="project" value="GO_Central"/>
</dbReference>
<dbReference type="GO" id="GO:0005886">
    <property type="term" value="C:plasma membrane"/>
    <property type="evidence" value="ECO:0000250"/>
    <property type="project" value="FlyBase"/>
</dbReference>
<dbReference type="GO" id="GO:0015276">
    <property type="term" value="F:ligand-gated monoatomic ion channel activity"/>
    <property type="evidence" value="ECO:0000250"/>
    <property type="project" value="FlyBase"/>
</dbReference>
<dbReference type="GO" id="GO:0008527">
    <property type="term" value="F:taste receptor activity"/>
    <property type="evidence" value="ECO:0000303"/>
    <property type="project" value="UniProtKB"/>
</dbReference>
<dbReference type="GO" id="GO:0034220">
    <property type="term" value="P:monoatomic ion transmembrane transport"/>
    <property type="evidence" value="ECO:0000250"/>
    <property type="project" value="FlyBase"/>
</dbReference>
<dbReference type="GO" id="GO:0050909">
    <property type="term" value="P:sensory perception of taste"/>
    <property type="evidence" value="ECO:0000303"/>
    <property type="project" value="UniProtKB"/>
</dbReference>
<dbReference type="GO" id="GO:0007165">
    <property type="term" value="P:signal transduction"/>
    <property type="evidence" value="ECO:0007669"/>
    <property type="project" value="UniProtKB-KW"/>
</dbReference>
<dbReference type="InterPro" id="IPR013604">
    <property type="entry name" value="7TM_chemorcpt"/>
</dbReference>
<dbReference type="PANTHER" id="PTHR21143:SF131">
    <property type="entry name" value="GUSTATORY AND ODORANT RECEPTOR 63A-RELATED"/>
    <property type="match status" value="1"/>
</dbReference>
<dbReference type="PANTHER" id="PTHR21143">
    <property type="entry name" value="INVERTEBRATE GUSTATORY RECEPTOR"/>
    <property type="match status" value="1"/>
</dbReference>
<dbReference type="Pfam" id="PF08395">
    <property type="entry name" value="7tm_7"/>
    <property type="match status" value="1"/>
</dbReference>